<protein>
    <recommendedName>
        <fullName evidence="1">Heme A synthase</fullName>
        <shortName evidence="1">HAS</shortName>
        <ecNumber evidence="1">1.17.99.9</ecNumber>
    </recommendedName>
    <alternativeName>
        <fullName evidence="1">Cytochrome aa3-controlling protein</fullName>
    </alternativeName>
</protein>
<proteinExistence type="inferred from homology"/>
<feature type="chain" id="PRO_1000187258" description="Heme A synthase">
    <location>
        <begin position="1"/>
        <end position="370"/>
    </location>
</feature>
<feature type="transmembrane region" description="Helical" evidence="1">
    <location>
        <begin position="15"/>
        <end position="35"/>
    </location>
</feature>
<feature type="transmembrane region" description="Helical" evidence="1">
    <location>
        <begin position="104"/>
        <end position="124"/>
    </location>
</feature>
<feature type="transmembrane region" description="Helical" evidence="1">
    <location>
        <begin position="129"/>
        <end position="149"/>
    </location>
</feature>
<feature type="transmembrane region" description="Helical" evidence="1">
    <location>
        <begin position="161"/>
        <end position="181"/>
    </location>
</feature>
<feature type="transmembrane region" description="Helical" evidence="1">
    <location>
        <begin position="200"/>
        <end position="220"/>
    </location>
</feature>
<feature type="transmembrane region" description="Helical" evidence="1">
    <location>
        <begin position="261"/>
        <end position="280"/>
    </location>
</feature>
<feature type="transmembrane region" description="Helical" evidence="1">
    <location>
        <begin position="293"/>
        <end position="313"/>
    </location>
</feature>
<feature type="transmembrane region" description="Helical" evidence="1">
    <location>
        <begin position="317"/>
        <end position="337"/>
    </location>
</feature>
<feature type="binding site" description="axial binding residue" evidence="1">
    <location>
        <position position="264"/>
    </location>
    <ligand>
        <name>heme</name>
        <dbReference type="ChEBI" id="CHEBI:30413"/>
    </ligand>
    <ligandPart>
        <name>Fe</name>
        <dbReference type="ChEBI" id="CHEBI:18248"/>
    </ligandPart>
</feature>
<feature type="binding site" description="axial binding residue" evidence="1">
    <location>
        <position position="324"/>
    </location>
    <ligand>
        <name>heme</name>
        <dbReference type="ChEBI" id="CHEBI:30413"/>
    </ligand>
    <ligandPart>
        <name>Fe</name>
        <dbReference type="ChEBI" id="CHEBI:18248"/>
    </ligandPart>
</feature>
<gene>
    <name evidence="1" type="primary">ctaA</name>
    <name type="ordered locus">Rpal_3097</name>
</gene>
<dbReference type="EC" id="1.17.99.9" evidence="1"/>
<dbReference type="EMBL" id="CP001096">
    <property type="protein sequence ID" value="ACF01603.1"/>
    <property type="molecule type" value="Genomic_DNA"/>
</dbReference>
<dbReference type="RefSeq" id="WP_012496229.1">
    <property type="nucleotide sequence ID" value="NC_011004.1"/>
</dbReference>
<dbReference type="SMR" id="B3QKF4"/>
<dbReference type="KEGG" id="rpt:Rpal_3097"/>
<dbReference type="HOGENOM" id="CLU_017627_0_0_5"/>
<dbReference type="OrthoDB" id="9793156at2"/>
<dbReference type="UniPathway" id="UPA00269">
    <property type="reaction ID" value="UER00713"/>
</dbReference>
<dbReference type="Proteomes" id="UP000001725">
    <property type="component" value="Chromosome"/>
</dbReference>
<dbReference type="GO" id="GO:0005886">
    <property type="term" value="C:plasma membrane"/>
    <property type="evidence" value="ECO:0007669"/>
    <property type="project" value="UniProtKB-SubCell"/>
</dbReference>
<dbReference type="GO" id="GO:0046872">
    <property type="term" value="F:metal ion binding"/>
    <property type="evidence" value="ECO:0007669"/>
    <property type="project" value="UniProtKB-KW"/>
</dbReference>
<dbReference type="GO" id="GO:0016653">
    <property type="term" value="F:oxidoreductase activity, acting on NAD(P)H, heme protein as acceptor"/>
    <property type="evidence" value="ECO:0007669"/>
    <property type="project" value="InterPro"/>
</dbReference>
<dbReference type="GO" id="GO:0006784">
    <property type="term" value="P:heme A biosynthetic process"/>
    <property type="evidence" value="ECO:0007669"/>
    <property type="project" value="UniProtKB-UniRule"/>
</dbReference>
<dbReference type="HAMAP" id="MF_01665">
    <property type="entry name" value="HemeA_synth_type2"/>
    <property type="match status" value="1"/>
</dbReference>
<dbReference type="InterPro" id="IPR003780">
    <property type="entry name" value="COX15/CtaA_fam"/>
</dbReference>
<dbReference type="InterPro" id="IPR023754">
    <property type="entry name" value="HemeA_Synthase_type2"/>
</dbReference>
<dbReference type="PANTHER" id="PTHR23289">
    <property type="entry name" value="CYTOCHROME C OXIDASE ASSEMBLY PROTEIN COX15"/>
    <property type="match status" value="1"/>
</dbReference>
<dbReference type="PANTHER" id="PTHR23289:SF2">
    <property type="entry name" value="CYTOCHROME C OXIDASE ASSEMBLY PROTEIN COX15 HOMOLOG"/>
    <property type="match status" value="1"/>
</dbReference>
<dbReference type="Pfam" id="PF02628">
    <property type="entry name" value="COX15-CtaA"/>
    <property type="match status" value="1"/>
</dbReference>
<keyword id="KW-1003">Cell membrane</keyword>
<keyword id="KW-0350">Heme biosynthesis</keyword>
<keyword id="KW-0408">Iron</keyword>
<keyword id="KW-0472">Membrane</keyword>
<keyword id="KW-0479">Metal-binding</keyword>
<keyword id="KW-0560">Oxidoreductase</keyword>
<keyword id="KW-0812">Transmembrane</keyword>
<keyword id="KW-1133">Transmembrane helix</keyword>
<sequence length="370" mass="40852">MTIAAAPPSSRFRGVRIWLTLVAALIAVMVLVGGATRLTESGLSIVEWKPVTGSLPPLTETQWHTAFDGYKQIPQYRELNAGMTLDQFKTIFWWEWSHRLLGRVIGIVYLLPFLWFLWRGAIGPEWKRALWIIFALGALQGAVGWWMVASGLSQRTEVSQVRLATHLSLALIIYAAIVWTLRRMADRARVAAPARLKVTALALLGLTFVQLYAGALVAGLRAGRLYNTWPMIDGALIPDAARLWFESPWWKNLFDNHLTVQFDHRMLAYALWTLAALHMIDALRTRAGAAARGAVLLFLALTVQAALGIFTVLYAAPIDLALAHQAMALVVLTLAVLQAERLTATREDRTALGRGAAGRLAVPSELFPSA</sequence>
<name>CTAA_RHOPT</name>
<accession>B3QKF4</accession>
<organism>
    <name type="scientific">Rhodopseudomonas palustris (strain TIE-1)</name>
    <dbReference type="NCBI Taxonomy" id="395960"/>
    <lineage>
        <taxon>Bacteria</taxon>
        <taxon>Pseudomonadati</taxon>
        <taxon>Pseudomonadota</taxon>
        <taxon>Alphaproteobacteria</taxon>
        <taxon>Hyphomicrobiales</taxon>
        <taxon>Nitrobacteraceae</taxon>
        <taxon>Rhodopseudomonas</taxon>
    </lineage>
</organism>
<evidence type="ECO:0000255" key="1">
    <source>
        <dbReference type="HAMAP-Rule" id="MF_01665"/>
    </source>
</evidence>
<reference key="1">
    <citation type="submission" date="2008-05" db="EMBL/GenBank/DDBJ databases">
        <title>Complete sequence of Rhodopseudomonas palustris TIE-1.</title>
        <authorList>
            <consortium name="US DOE Joint Genome Institute"/>
            <person name="Lucas S."/>
            <person name="Copeland A."/>
            <person name="Lapidus A."/>
            <person name="Glavina del Rio T."/>
            <person name="Dalin E."/>
            <person name="Tice H."/>
            <person name="Pitluck S."/>
            <person name="Chain P."/>
            <person name="Malfatti S."/>
            <person name="Shin M."/>
            <person name="Vergez L."/>
            <person name="Lang D."/>
            <person name="Schmutz J."/>
            <person name="Larimer F."/>
            <person name="Land M."/>
            <person name="Hauser L."/>
            <person name="Kyrpides N."/>
            <person name="Mikhailova N."/>
            <person name="Emerson D."/>
            <person name="Newman D.K."/>
            <person name="Roden E."/>
            <person name="Richardson P."/>
        </authorList>
    </citation>
    <scope>NUCLEOTIDE SEQUENCE [LARGE SCALE GENOMIC DNA]</scope>
    <source>
        <strain>TIE-1</strain>
    </source>
</reference>
<comment type="function">
    <text evidence="1">Catalyzes the conversion of heme O to heme A by two successive hydroxylations of the methyl group at C8. The first hydroxylation forms heme I, the second hydroxylation results in an unstable dihydroxymethyl group, which spontaneously dehydrates, resulting in the formyl group of heme A.</text>
</comment>
<comment type="catalytic activity">
    <reaction evidence="1">
        <text>Fe(II)-heme o + 2 A + H2O = Fe(II)-heme a + 2 AH2</text>
        <dbReference type="Rhea" id="RHEA:63388"/>
        <dbReference type="ChEBI" id="CHEBI:13193"/>
        <dbReference type="ChEBI" id="CHEBI:15377"/>
        <dbReference type="ChEBI" id="CHEBI:17499"/>
        <dbReference type="ChEBI" id="CHEBI:60530"/>
        <dbReference type="ChEBI" id="CHEBI:61715"/>
        <dbReference type="EC" id="1.17.99.9"/>
    </reaction>
    <physiologicalReaction direction="left-to-right" evidence="1">
        <dbReference type="Rhea" id="RHEA:63389"/>
    </physiologicalReaction>
</comment>
<comment type="cofactor">
    <cofactor evidence="1">
        <name>heme b</name>
        <dbReference type="ChEBI" id="CHEBI:60344"/>
    </cofactor>
</comment>
<comment type="pathway">
    <text evidence="1">Porphyrin-containing compound metabolism; heme A biosynthesis; heme A from heme O: step 1/1.</text>
</comment>
<comment type="subunit">
    <text evidence="1">Interacts with CtaB.</text>
</comment>
<comment type="subcellular location">
    <subcellularLocation>
        <location evidence="1">Cell membrane</location>
        <topology evidence="1">Multi-pass membrane protein</topology>
    </subcellularLocation>
</comment>
<comment type="similarity">
    <text evidence="1">Belongs to the COX15/CtaA family. Type 2 subfamily.</text>
</comment>